<protein>
    <recommendedName>
        <fullName evidence="1">Shikimate kinase</fullName>
        <shortName evidence="1">SK</shortName>
        <ecNumber evidence="1">2.7.1.71</ecNumber>
    </recommendedName>
</protein>
<keyword id="KW-0028">Amino-acid biosynthesis</keyword>
<keyword id="KW-0057">Aromatic amino acid biosynthesis</keyword>
<keyword id="KW-0067">ATP-binding</keyword>
<keyword id="KW-0963">Cytoplasm</keyword>
<keyword id="KW-0418">Kinase</keyword>
<keyword id="KW-0460">Magnesium</keyword>
<keyword id="KW-0479">Metal-binding</keyword>
<keyword id="KW-0547">Nucleotide-binding</keyword>
<keyword id="KW-0808">Transferase</keyword>
<proteinExistence type="inferred from homology"/>
<sequence>MSLVTALNGLDLFLVGLMGSGKTTIGKLLAESLGYTYVDTDSLIENVTGRSIPEIFASDGEAGFRQIETQVLEEVASYRRLVVATGGGIVIRPENWSYLQQGLVIWLDVPIPELLRRLEGDQNRPLLQTEAPATTLQALWEQRRDRYAQADLRIAIEASEDPEVTMQRILEVIPSVLKNSADSSPAEIET</sequence>
<accession>Q5N4D3</accession>
<dbReference type="EC" id="2.7.1.71" evidence="1"/>
<dbReference type="EMBL" id="AP008231">
    <property type="protein sequence ID" value="BAD78836.1"/>
    <property type="molecule type" value="Genomic_DNA"/>
</dbReference>
<dbReference type="RefSeq" id="WP_011242958.1">
    <property type="nucleotide sequence ID" value="NZ_CP085785.1"/>
</dbReference>
<dbReference type="SMR" id="Q5N4D3"/>
<dbReference type="KEGG" id="syc:syc0646_d"/>
<dbReference type="eggNOG" id="COG0703">
    <property type="taxonomic scope" value="Bacteria"/>
</dbReference>
<dbReference type="UniPathway" id="UPA00053">
    <property type="reaction ID" value="UER00088"/>
</dbReference>
<dbReference type="Proteomes" id="UP000001175">
    <property type="component" value="Chromosome"/>
</dbReference>
<dbReference type="GO" id="GO:0005829">
    <property type="term" value="C:cytosol"/>
    <property type="evidence" value="ECO:0007669"/>
    <property type="project" value="TreeGrafter"/>
</dbReference>
<dbReference type="GO" id="GO:0005524">
    <property type="term" value="F:ATP binding"/>
    <property type="evidence" value="ECO:0007669"/>
    <property type="project" value="UniProtKB-UniRule"/>
</dbReference>
<dbReference type="GO" id="GO:0000287">
    <property type="term" value="F:magnesium ion binding"/>
    <property type="evidence" value="ECO:0007669"/>
    <property type="project" value="UniProtKB-UniRule"/>
</dbReference>
<dbReference type="GO" id="GO:0004765">
    <property type="term" value="F:shikimate kinase activity"/>
    <property type="evidence" value="ECO:0007669"/>
    <property type="project" value="UniProtKB-UniRule"/>
</dbReference>
<dbReference type="GO" id="GO:0008652">
    <property type="term" value="P:amino acid biosynthetic process"/>
    <property type="evidence" value="ECO:0007669"/>
    <property type="project" value="UniProtKB-KW"/>
</dbReference>
<dbReference type="GO" id="GO:0009073">
    <property type="term" value="P:aromatic amino acid family biosynthetic process"/>
    <property type="evidence" value="ECO:0007669"/>
    <property type="project" value="UniProtKB-KW"/>
</dbReference>
<dbReference type="GO" id="GO:0009423">
    <property type="term" value="P:chorismate biosynthetic process"/>
    <property type="evidence" value="ECO:0007669"/>
    <property type="project" value="UniProtKB-UniRule"/>
</dbReference>
<dbReference type="CDD" id="cd00464">
    <property type="entry name" value="SK"/>
    <property type="match status" value="1"/>
</dbReference>
<dbReference type="Gene3D" id="3.40.50.300">
    <property type="entry name" value="P-loop containing nucleotide triphosphate hydrolases"/>
    <property type="match status" value="1"/>
</dbReference>
<dbReference type="HAMAP" id="MF_00109">
    <property type="entry name" value="Shikimate_kinase"/>
    <property type="match status" value="1"/>
</dbReference>
<dbReference type="InterPro" id="IPR027417">
    <property type="entry name" value="P-loop_NTPase"/>
</dbReference>
<dbReference type="InterPro" id="IPR031322">
    <property type="entry name" value="Shikimate/glucono_kinase"/>
</dbReference>
<dbReference type="InterPro" id="IPR000623">
    <property type="entry name" value="Shikimate_kinase/TSH1"/>
</dbReference>
<dbReference type="InterPro" id="IPR023000">
    <property type="entry name" value="Shikimate_kinase_CS"/>
</dbReference>
<dbReference type="PANTHER" id="PTHR21087">
    <property type="entry name" value="SHIKIMATE KINASE"/>
    <property type="match status" value="1"/>
</dbReference>
<dbReference type="PANTHER" id="PTHR21087:SF16">
    <property type="entry name" value="SHIKIMATE KINASE 1, CHLOROPLASTIC"/>
    <property type="match status" value="1"/>
</dbReference>
<dbReference type="Pfam" id="PF01202">
    <property type="entry name" value="SKI"/>
    <property type="match status" value="1"/>
</dbReference>
<dbReference type="PRINTS" id="PR01100">
    <property type="entry name" value="SHIKIMTKNASE"/>
</dbReference>
<dbReference type="SUPFAM" id="SSF52540">
    <property type="entry name" value="P-loop containing nucleoside triphosphate hydrolases"/>
    <property type="match status" value="1"/>
</dbReference>
<dbReference type="PROSITE" id="PS01128">
    <property type="entry name" value="SHIKIMATE_KINASE"/>
    <property type="match status" value="1"/>
</dbReference>
<evidence type="ECO:0000255" key="1">
    <source>
        <dbReference type="HAMAP-Rule" id="MF_00109"/>
    </source>
</evidence>
<reference key="1">
    <citation type="journal article" date="2007" name="Photosyn. Res.">
        <title>Complete nucleotide sequence of the freshwater unicellular cyanobacterium Synechococcus elongatus PCC 6301 chromosome: gene content and organization.</title>
        <authorList>
            <person name="Sugita C."/>
            <person name="Ogata K."/>
            <person name="Shikata M."/>
            <person name="Jikuya H."/>
            <person name="Takano J."/>
            <person name="Furumichi M."/>
            <person name="Kanehisa M."/>
            <person name="Omata T."/>
            <person name="Sugiura M."/>
            <person name="Sugita M."/>
        </authorList>
    </citation>
    <scope>NUCLEOTIDE SEQUENCE [LARGE SCALE GENOMIC DNA]</scope>
    <source>
        <strain>ATCC 27144 / PCC 6301 / SAUG 1402/1</strain>
    </source>
</reference>
<feature type="chain" id="PRO_0000237946" description="Shikimate kinase">
    <location>
        <begin position="1"/>
        <end position="190"/>
    </location>
</feature>
<feature type="binding site" evidence="1">
    <location>
        <begin position="19"/>
        <end position="24"/>
    </location>
    <ligand>
        <name>ATP</name>
        <dbReference type="ChEBI" id="CHEBI:30616"/>
    </ligand>
</feature>
<feature type="binding site" evidence="1">
    <location>
        <position position="23"/>
    </location>
    <ligand>
        <name>Mg(2+)</name>
        <dbReference type="ChEBI" id="CHEBI:18420"/>
    </ligand>
</feature>
<feature type="binding site" evidence="1">
    <location>
        <position position="41"/>
    </location>
    <ligand>
        <name>substrate</name>
    </ligand>
</feature>
<feature type="binding site" evidence="1">
    <location>
        <position position="65"/>
    </location>
    <ligand>
        <name>substrate</name>
    </ligand>
</feature>
<feature type="binding site" evidence="1">
    <location>
        <position position="87"/>
    </location>
    <ligand>
        <name>substrate</name>
    </ligand>
</feature>
<feature type="binding site" evidence="1">
    <location>
        <position position="124"/>
    </location>
    <ligand>
        <name>ATP</name>
        <dbReference type="ChEBI" id="CHEBI:30616"/>
    </ligand>
</feature>
<feature type="binding site" evidence="1">
    <location>
        <position position="143"/>
    </location>
    <ligand>
        <name>substrate</name>
    </ligand>
</feature>
<comment type="function">
    <text evidence="1">Catalyzes the specific phosphorylation of the 3-hydroxyl group of shikimic acid using ATP as a cosubstrate.</text>
</comment>
<comment type="catalytic activity">
    <reaction evidence="1">
        <text>shikimate + ATP = 3-phosphoshikimate + ADP + H(+)</text>
        <dbReference type="Rhea" id="RHEA:13121"/>
        <dbReference type="ChEBI" id="CHEBI:15378"/>
        <dbReference type="ChEBI" id="CHEBI:30616"/>
        <dbReference type="ChEBI" id="CHEBI:36208"/>
        <dbReference type="ChEBI" id="CHEBI:145989"/>
        <dbReference type="ChEBI" id="CHEBI:456216"/>
        <dbReference type="EC" id="2.7.1.71"/>
    </reaction>
</comment>
<comment type="cofactor">
    <cofactor evidence="1">
        <name>Mg(2+)</name>
        <dbReference type="ChEBI" id="CHEBI:18420"/>
    </cofactor>
    <text evidence="1">Binds 1 Mg(2+) ion per subunit.</text>
</comment>
<comment type="pathway">
    <text evidence="1">Metabolic intermediate biosynthesis; chorismate biosynthesis; chorismate from D-erythrose 4-phosphate and phosphoenolpyruvate: step 5/7.</text>
</comment>
<comment type="subunit">
    <text evidence="1">Monomer.</text>
</comment>
<comment type="subcellular location">
    <subcellularLocation>
        <location evidence="1">Cytoplasm</location>
    </subcellularLocation>
</comment>
<comment type="similarity">
    <text evidence="1">Belongs to the shikimate kinase family.</text>
</comment>
<name>AROK_SYNP6</name>
<organism>
    <name type="scientific">Synechococcus sp. (strain ATCC 27144 / PCC 6301 / SAUG 1402/1)</name>
    <name type="common">Anacystis nidulans</name>
    <dbReference type="NCBI Taxonomy" id="269084"/>
    <lineage>
        <taxon>Bacteria</taxon>
        <taxon>Bacillati</taxon>
        <taxon>Cyanobacteriota</taxon>
        <taxon>Cyanophyceae</taxon>
        <taxon>Synechococcales</taxon>
        <taxon>Synechococcaceae</taxon>
        <taxon>Synechococcus</taxon>
    </lineage>
</organism>
<gene>
    <name evidence="1" type="primary">aroK</name>
    <name type="ordered locus">syc0646_d</name>
</gene>